<name>NSA2_CANAL</name>
<feature type="chain" id="PRO_0000320412" description="Ribosome biogenesis protein NSA2">
    <location>
        <begin position="1"/>
        <end position="261"/>
    </location>
</feature>
<feature type="region of interest" description="Disordered" evidence="4">
    <location>
        <begin position="1"/>
        <end position="38"/>
    </location>
</feature>
<feature type="region of interest" description="Disordered" evidence="4">
    <location>
        <begin position="59"/>
        <end position="85"/>
    </location>
</feature>
<feature type="short sequence motif" description="Nuclear localization signal 1" evidence="3">
    <location>
        <begin position="11"/>
        <end position="18"/>
    </location>
</feature>
<feature type="short sequence motif" description="Nuclear localization signal 2" evidence="3">
    <location>
        <begin position="51"/>
        <end position="58"/>
    </location>
</feature>
<feature type="compositionally biased region" description="Basic and acidic residues" evidence="4">
    <location>
        <begin position="17"/>
        <end position="37"/>
    </location>
</feature>
<comment type="function">
    <text evidence="1">Involved in the biogenesis of the 60S ribosomal subunit. May play a part in the quality control of pre-60S particles (By similarity).</text>
</comment>
<comment type="subunit">
    <text evidence="2">Component of the pre-66S ribosomal particle. Interacts with NOP7 and RRP1. Interacts with RSA4 (via WD repeats).</text>
</comment>
<comment type="subcellular location">
    <subcellularLocation>
        <location evidence="1">Nucleus</location>
        <location evidence="1">Nucleolus</location>
    </subcellularLocation>
</comment>
<comment type="similarity">
    <text evidence="5">Belongs to the eukaryotic ribosomal protein eS8 family. Ribosome biogenesis protein NSA2 subfamily.</text>
</comment>
<evidence type="ECO:0000250" key="1"/>
<evidence type="ECO:0000250" key="2">
    <source>
        <dbReference type="UniProtKB" id="P40078"/>
    </source>
</evidence>
<evidence type="ECO:0000255" key="3">
    <source>
        <dbReference type="PROSITE-ProRule" id="PRU00768"/>
    </source>
</evidence>
<evidence type="ECO:0000256" key="4">
    <source>
        <dbReference type="SAM" id="MobiDB-lite"/>
    </source>
</evidence>
<evidence type="ECO:0000305" key="5"/>
<organism>
    <name type="scientific">Candida albicans (strain SC5314 / ATCC MYA-2876)</name>
    <name type="common">Yeast</name>
    <dbReference type="NCBI Taxonomy" id="237561"/>
    <lineage>
        <taxon>Eukaryota</taxon>
        <taxon>Fungi</taxon>
        <taxon>Dikarya</taxon>
        <taxon>Ascomycota</taxon>
        <taxon>Saccharomycotina</taxon>
        <taxon>Pichiomycetes</taxon>
        <taxon>Debaryomycetaceae</taxon>
        <taxon>Candida/Lodderomyces clade</taxon>
        <taxon>Candida</taxon>
    </lineage>
</organism>
<gene>
    <name type="primary">NSA2</name>
    <name type="ordered locus">CAALFM_C306380WA</name>
    <name type="ORF">CaO19.7424</name>
</gene>
<keyword id="KW-0539">Nucleus</keyword>
<keyword id="KW-1185">Reference proteome</keyword>
<keyword id="KW-0687">Ribonucleoprotein</keyword>
<keyword id="KW-0690">Ribosome biogenesis</keyword>
<keyword id="KW-0698">rRNA processing</keyword>
<dbReference type="EMBL" id="CP017625">
    <property type="protein sequence ID" value="AOW28645.1"/>
    <property type="molecule type" value="Genomic_DNA"/>
</dbReference>
<dbReference type="RefSeq" id="XP_716088.1">
    <property type="nucleotide sequence ID" value="XM_710995.1"/>
</dbReference>
<dbReference type="RefSeq" id="XP_716639.2">
    <property type="nucleotide sequence ID" value="XM_711546.2"/>
</dbReference>
<dbReference type="SMR" id="Q5A2Y7"/>
<dbReference type="BioGRID" id="1225353">
    <property type="interactions" value="2"/>
</dbReference>
<dbReference type="FunCoup" id="Q5A2Y7">
    <property type="interactions" value="1281"/>
</dbReference>
<dbReference type="STRING" id="237561.Q5A2Y7"/>
<dbReference type="EnsemblFungi" id="C3_06160C_A-T">
    <property type="protein sequence ID" value="C3_06160C_A-T-p1"/>
    <property type="gene ID" value="C3_06160C_A"/>
</dbReference>
<dbReference type="EnsemblFungi" id="C3_06380W_A-T">
    <property type="protein sequence ID" value="C3_06380W_A-T-p1"/>
    <property type="gene ID" value="C3_06380W_A"/>
</dbReference>
<dbReference type="GeneID" id="3642259"/>
<dbReference type="KEGG" id="cal:CAALFM_C306160CA"/>
<dbReference type="KEGG" id="cal:CAALFM_C306380WA"/>
<dbReference type="CGD" id="CAL0000197650">
    <property type="gene designation" value="NSA2"/>
</dbReference>
<dbReference type="CGD" id="CAL0000192673">
    <property type="gene designation" value="orf19.7397.1"/>
</dbReference>
<dbReference type="VEuPathDB" id="FungiDB:C3_06160C_A"/>
<dbReference type="VEuPathDB" id="FungiDB:C3_06380W_A"/>
<dbReference type="HOGENOM" id="CLU_1070048_0_0_1"/>
<dbReference type="InParanoid" id="Q5A2Y7"/>
<dbReference type="OMA" id="TNTPEND"/>
<dbReference type="OrthoDB" id="1847590at2759"/>
<dbReference type="Proteomes" id="UP000000559">
    <property type="component" value="Chromosome 3"/>
</dbReference>
<dbReference type="GO" id="GO:0005730">
    <property type="term" value="C:nucleolus"/>
    <property type="evidence" value="ECO:0007669"/>
    <property type="project" value="UniProtKB-SubCell"/>
</dbReference>
<dbReference type="GO" id="GO:0030687">
    <property type="term" value="C:preribosome, large subunit precursor"/>
    <property type="evidence" value="ECO:0000318"/>
    <property type="project" value="GO_Central"/>
</dbReference>
<dbReference type="GO" id="GO:0000460">
    <property type="term" value="P:maturation of 5.8S rRNA"/>
    <property type="evidence" value="ECO:0000318"/>
    <property type="project" value="GO_Central"/>
</dbReference>
<dbReference type="GO" id="GO:0000470">
    <property type="term" value="P:maturation of LSU-rRNA"/>
    <property type="evidence" value="ECO:0000318"/>
    <property type="project" value="GO_Central"/>
</dbReference>
<dbReference type="CDD" id="cd11381">
    <property type="entry name" value="NSA2"/>
    <property type="match status" value="1"/>
</dbReference>
<dbReference type="FunFam" id="2.40.10.310:FF:000001">
    <property type="entry name" value="NSA2, ribosome biogenesis homolog"/>
    <property type="match status" value="1"/>
</dbReference>
<dbReference type="Gene3D" id="2.40.10.310">
    <property type="match status" value="1"/>
</dbReference>
<dbReference type="InterPro" id="IPR039411">
    <property type="entry name" value="NSA2_fam"/>
</dbReference>
<dbReference type="InterPro" id="IPR022309">
    <property type="entry name" value="Ribosomal_Se8/biogenesis_NSA2"/>
</dbReference>
<dbReference type="PANTHER" id="PTHR12642">
    <property type="entry name" value="RIBOSOME BIOGENESIS PROTEIN NSA2 HOMOLOG"/>
    <property type="match status" value="1"/>
</dbReference>
<dbReference type="Pfam" id="PF01201">
    <property type="entry name" value="Ribosomal_S8e"/>
    <property type="match status" value="1"/>
</dbReference>
<accession>Q5A2Y7</accession>
<accession>A0A1D8PKJ6</accession>
<protein>
    <recommendedName>
        <fullName>Ribosome biogenesis protein NSA2</fullName>
    </recommendedName>
</protein>
<sequence>MPQNEYIEQHIKKHGRRLDYEERKRKKEAREGHRVAKDAQTLKGWRAKQFAKKRYAEKVAMKKKIKAHQESKVKGPSTPKAEDGEALPTYLLDRQTNNTAKAISSSIKQKRLEKADKFQVPLPKVKGISEEEMFKVIKTGKSKSKSWKRMITKHTFVGEGFTRRPVKMERIIRPAALRQKKANVTHPELGVTVFLPILGVKKNPQSPMYTQLGVLTKGTIIEVNVSELGLVTAGGKVVWGKYAQITNEPDRDGCVNAVLLV</sequence>
<proteinExistence type="inferred from homology"/>
<reference key="1">
    <citation type="journal article" date="2004" name="Proc. Natl. Acad. Sci. U.S.A.">
        <title>The diploid genome sequence of Candida albicans.</title>
        <authorList>
            <person name="Jones T."/>
            <person name="Federspiel N.A."/>
            <person name="Chibana H."/>
            <person name="Dungan J."/>
            <person name="Kalman S."/>
            <person name="Magee B.B."/>
            <person name="Newport G."/>
            <person name="Thorstenson Y.R."/>
            <person name="Agabian N."/>
            <person name="Magee P.T."/>
            <person name="Davis R.W."/>
            <person name="Scherer S."/>
        </authorList>
    </citation>
    <scope>NUCLEOTIDE SEQUENCE [LARGE SCALE GENOMIC DNA]</scope>
    <source>
        <strain>SC5314 / ATCC MYA-2876</strain>
    </source>
</reference>
<reference key="2">
    <citation type="journal article" date="2007" name="Genome Biol.">
        <title>Assembly of the Candida albicans genome into sixteen supercontigs aligned on the eight chromosomes.</title>
        <authorList>
            <person name="van het Hoog M."/>
            <person name="Rast T.J."/>
            <person name="Martchenko M."/>
            <person name="Grindle S."/>
            <person name="Dignard D."/>
            <person name="Hogues H."/>
            <person name="Cuomo C."/>
            <person name="Berriman M."/>
            <person name="Scherer S."/>
            <person name="Magee B.B."/>
            <person name="Whiteway M."/>
            <person name="Chibana H."/>
            <person name="Nantel A."/>
            <person name="Magee P.T."/>
        </authorList>
    </citation>
    <scope>GENOME REANNOTATION</scope>
    <source>
        <strain>SC5314 / ATCC MYA-2876</strain>
    </source>
</reference>
<reference key="3">
    <citation type="journal article" date="2013" name="Genome Biol.">
        <title>Assembly of a phased diploid Candida albicans genome facilitates allele-specific measurements and provides a simple model for repeat and indel structure.</title>
        <authorList>
            <person name="Muzzey D."/>
            <person name="Schwartz K."/>
            <person name="Weissman J.S."/>
            <person name="Sherlock G."/>
        </authorList>
    </citation>
    <scope>NUCLEOTIDE SEQUENCE [LARGE SCALE GENOMIC DNA]</scope>
    <scope>GENOME REANNOTATION</scope>
    <source>
        <strain>SC5314 / ATCC MYA-2876</strain>
    </source>
</reference>